<proteinExistence type="evidence at transcript level"/>
<reference key="1">
    <citation type="journal article" date="1999" name="Nature">
        <title>Sequence and analysis of chromosome 4 of the plant Arabidopsis thaliana.</title>
        <authorList>
            <person name="Mayer K.F.X."/>
            <person name="Schueller C."/>
            <person name="Wambutt R."/>
            <person name="Murphy G."/>
            <person name="Volckaert G."/>
            <person name="Pohl T."/>
            <person name="Duesterhoeft A."/>
            <person name="Stiekema W."/>
            <person name="Entian K.-D."/>
            <person name="Terryn N."/>
            <person name="Harris B."/>
            <person name="Ansorge W."/>
            <person name="Brandt P."/>
            <person name="Grivell L.A."/>
            <person name="Rieger M."/>
            <person name="Weichselgartner M."/>
            <person name="de Simone V."/>
            <person name="Obermaier B."/>
            <person name="Mache R."/>
            <person name="Mueller M."/>
            <person name="Kreis M."/>
            <person name="Delseny M."/>
            <person name="Puigdomenech P."/>
            <person name="Watson M."/>
            <person name="Schmidtheini T."/>
            <person name="Reichert B."/>
            <person name="Portetelle D."/>
            <person name="Perez-Alonso M."/>
            <person name="Boutry M."/>
            <person name="Bancroft I."/>
            <person name="Vos P."/>
            <person name="Hoheisel J."/>
            <person name="Zimmermann W."/>
            <person name="Wedler H."/>
            <person name="Ridley P."/>
            <person name="Langham S.-A."/>
            <person name="McCullagh B."/>
            <person name="Bilham L."/>
            <person name="Robben J."/>
            <person name="van der Schueren J."/>
            <person name="Grymonprez B."/>
            <person name="Chuang Y.-J."/>
            <person name="Vandenbussche F."/>
            <person name="Braeken M."/>
            <person name="Weltjens I."/>
            <person name="Voet M."/>
            <person name="Bastiaens I."/>
            <person name="Aert R."/>
            <person name="Defoor E."/>
            <person name="Weitzenegger T."/>
            <person name="Bothe G."/>
            <person name="Ramsperger U."/>
            <person name="Hilbert H."/>
            <person name="Braun M."/>
            <person name="Holzer E."/>
            <person name="Brandt A."/>
            <person name="Peters S."/>
            <person name="van Staveren M."/>
            <person name="Dirkse W."/>
            <person name="Mooijman P."/>
            <person name="Klein Lankhorst R."/>
            <person name="Rose M."/>
            <person name="Hauf J."/>
            <person name="Koetter P."/>
            <person name="Berneiser S."/>
            <person name="Hempel S."/>
            <person name="Feldpausch M."/>
            <person name="Lamberth S."/>
            <person name="Van den Daele H."/>
            <person name="De Keyser A."/>
            <person name="Buysshaert C."/>
            <person name="Gielen J."/>
            <person name="Villarroel R."/>
            <person name="De Clercq R."/>
            <person name="van Montagu M."/>
            <person name="Rogers J."/>
            <person name="Cronin A."/>
            <person name="Quail M.A."/>
            <person name="Bray-Allen S."/>
            <person name="Clark L."/>
            <person name="Doggett J."/>
            <person name="Hall S."/>
            <person name="Kay M."/>
            <person name="Lennard N."/>
            <person name="McLay K."/>
            <person name="Mayes R."/>
            <person name="Pettett A."/>
            <person name="Rajandream M.A."/>
            <person name="Lyne M."/>
            <person name="Benes V."/>
            <person name="Rechmann S."/>
            <person name="Borkova D."/>
            <person name="Bloecker H."/>
            <person name="Scharfe M."/>
            <person name="Grimm M."/>
            <person name="Loehnert T.-H."/>
            <person name="Dose S."/>
            <person name="de Haan M."/>
            <person name="Maarse A.C."/>
            <person name="Schaefer M."/>
            <person name="Mueller-Auer S."/>
            <person name="Gabel C."/>
            <person name="Fuchs M."/>
            <person name="Fartmann B."/>
            <person name="Granderath K."/>
            <person name="Dauner D."/>
            <person name="Herzl A."/>
            <person name="Neumann S."/>
            <person name="Argiriou A."/>
            <person name="Vitale D."/>
            <person name="Liguori R."/>
            <person name="Piravandi E."/>
            <person name="Massenet O."/>
            <person name="Quigley F."/>
            <person name="Clabauld G."/>
            <person name="Muendlein A."/>
            <person name="Felber R."/>
            <person name="Schnabl S."/>
            <person name="Hiller R."/>
            <person name="Schmidt W."/>
            <person name="Lecharny A."/>
            <person name="Aubourg S."/>
            <person name="Chefdor F."/>
            <person name="Cooke R."/>
            <person name="Berger C."/>
            <person name="Monfort A."/>
            <person name="Casacuberta E."/>
            <person name="Gibbons T."/>
            <person name="Weber N."/>
            <person name="Vandenbol M."/>
            <person name="Bargues M."/>
            <person name="Terol J."/>
            <person name="Torres A."/>
            <person name="Perez-Perez A."/>
            <person name="Purnelle B."/>
            <person name="Bent E."/>
            <person name="Johnson S."/>
            <person name="Tacon D."/>
            <person name="Jesse T."/>
            <person name="Heijnen L."/>
            <person name="Schwarz S."/>
            <person name="Scholler P."/>
            <person name="Heber S."/>
            <person name="Francs P."/>
            <person name="Bielke C."/>
            <person name="Frishman D."/>
            <person name="Haase D."/>
            <person name="Lemcke K."/>
            <person name="Mewes H.-W."/>
            <person name="Stocker S."/>
            <person name="Zaccaria P."/>
            <person name="Bevan M."/>
            <person name="Wilson R.K."/>
            <person name="de la Bastide M."/>
            <person name="Habermann K."/>
            <person name="Parnell L."/>
            <person name="Dedhia N."/>
            <person name="Gnoj L."/>
            <person name="Schutz K."/>
            <person name="Huang E."/>
            <person name="Spiegel L."/>
            <person name="Sekhon M."/>
            <person name="Murray J."/>
            <person name="Sheet P."/>
            <person name="Cordes M."/>
            <person name="Abu-Threideh J."/>
            <person name="Stoneking T."/>
            <person name="Kalicki J."/>
            <person name="Graves T."/>
            <person name="Harmon G."/>
            <person name="Edwards J."/>
            <person name="Latreille P."/>
            <person name="Courtney L."/>
            <person name="Cloud J."/>
            <person name="Abbott A."/>
            <person name="Scott K."/>
            <person name="Johnson D."/>
            <person name="Minx P."/>
            <person name="Bentley D."/>
            <person name="Fulton B."/>
            <person name="Miller N."/>
            <person name="Greco T."/>
            <person name="Kemp K."/>
            <person name="Kramer J."/>
            <person name="Fulton L."/>
            <person name="Mardis E."/>
            <person name="Dante M."/>
            <person name="Pepin K."/>
            <person name="Hillier L.W."/>
            <person name="Nelson J."/>
            <person name="Spieth J."/>
            <person name="Ryan E."/>
            <person name="Andrews S."/>
            <person name="Geisel C."/>
            <person name="Layman D."/>
            <person name="Du H."/>
            <person name="Ali J."/>
            <person name="Berghoff A."/>
            <person name="Jones K."/>
            <person name="Drone K."/>
            <person name="Cotton M."/>
            <person name="Joshu C."/>
            <person name="Antonoiu B."/>
            <person name="Zidanic M."/>
            <person name="Strong C."/>
            <person name="Sun H."/>
            <person name="Lamar B."/>
            <person name="Yordan C."/>
            <person name="Ma P."/>
            <person name="Zhong J."/>
            <person name="Preston R."/>
            <person name="Vil D."/>
            <person name="Shekher M."/>
            <person name="Matero A."/>
            <person name="Shah R."/>
            <person name="Swaby I.K."/>
            <person name="O'Shaughnessy A."/>
            <person name="Rodriguez M."/>
            <person name="Hoffman J."/>
            <person name="Till S."/>
            <person name="Granat S."/>
            <person name="Shohdy N."/>
            <person name="Hasegawa A."/>
            <person name="Hameed A."/>
            <person name="Lodhi M."/>
            <person name="Johnson A."/>
            <person name="Chen E."/>
            <person name="Marra M.A."/>
            <person name="Martienssen R."/>
            <person name="McCombie W.R."/>
        </authorList>
    </citation>
    <scope>NUCLEOTIDE SEQUENCE [LARGE SCALE GENOMIC DNA]</scope>
    <source>
        <strain>cv. Columbia</strain>
    </source>
</reference>
<reference key="2">
    <citation type="journal article" date="2017" name="Plant J.">
        <title>Araport11: a complete reannotation of the Arabidopsis thaliana reference genome.</title>
        <authorList>
            <person name="Cheng C.Y."/>
            <person name="Krishnakumar V."/>
            <person name="Chan A.P."/>
            <person name="Thibaud-Nissen F."/>
            <person name="Schobel S."/>
            <person name="Town C.D."/>
        </authorList>
    </citation>
    <scope>GENOME REANNOTATION</scope>
    <source>
        <strain>cv. Columbia</strain>
    </source>
</reference>
<reference key="3">
    <citation type="journal article" date="2013" name="PLoS ONE">
        <title>An intergenic region shared by At4g35985 and At4g35987 in Arabidopsis thaliana is a tissue specific and stress inducible bidirectional promoter analyzed in transgenic arabidopsis and tobacco plants.</title>
        <authorList>
            <person name="Banerjee J."/>
            <person name="Sahoo D.K."/>
            <person name="Dey N."/>
            <person name="Houtz R.L."/>
            <person name="Maiti I.B."/>
        </authorList>
    </citation>
    <scope>TISSUE SPECIFICITY</scope>
    <scope>INDUCTION BY PERONOSPORA TABACINA; SALT STRESS AND COLD</scope>
    <source>
        <strain>cv. Columbia</strain>
    </source>
</reference>
<dbReference type="EMBL" id="AL022373">
    <property type="protein sequence ID" value="CAA18492.1"/>
    <property type="status" value="ALT_SEQ"/>
    <property type="molecule type" value="Genomic_DNA"/>
</dbReference>
<dbReference type="EMBL" id="AL031986">
    <property type="protein sequence ID" value="CAA21484.1"/>
    <property type="status" value="ALT_SEQ"/>
    <property type="molecule type" value="Genomic_DNA"/>
</dbReference>
<dbReference type="EMBL" id="AL161588">
    <property type="protein sequence ID" value="CAB81507.1"/>
    <property type="status" value="ALT_SEQ"/>
    <property type="molecule type" value="Genomic_DNA"/>
</dbReference>
<dbReference type="EMBL" id="CP002687">
    <property type="protein sequence ID" value="AEE86598.1"/>
    <property type="molecule type" value="Genomic_DNA"/>
</dbReference>
<dbReference type="PIR" id="T04708">
    <property type="entry name" value="T04708"/>
</dbReference>
<dbReference type="RefSeq" id="NP_567995.1">
    <property type="nucleotide sequence ID" value="NM_119765.2"/>
</dbReference>
<dbReference type="FunCoup" id="F4JNX2">
    <property type="interactions" value="555"/>
</dbReference>
<dbReference type="STRING" id="3702.F4JNX2"/>
<dbReference type="PaxDb" id="3702-AT4G35985.1"/>
<dbReference type="ProteomicsDB" id="234496"/>
<dbReference type="EnsemblPlants" id="AT4G35985.1">
    <property type="protein sequence ID" value="AT4G35985.1"/>
    <property type="gene ID" value="AT4G35985"/>
</dbReference>
<dbReference type="GeneID" id="829753"/>
<dbReference type="Gramene" id="AT4G35985.1">
    <property type="protein sequence ID" value="AT4G35985.1"/>
    <property type="gene ID" value="AT4G35985"/>
</dbReference>
<dbReference type="KEGG" id="ath:AT4G35985"/>
<dbReference type="Araport" id="AT4G35985"/>
<dbReference type="TAIR" id="AT4G35985"/>
<dbReference type="eggNOG" id="ENOG502QPY0">
    <property type="taxonomic scope" value="Eukaryota"/>
</dbReference>
<dbReference type="HOGENOM" id="CLU_034602_0_0_1"/>
<dbReference type="InParanoid" id="F4JNX2"/>
<dbReference type="OrthoDB" id="20821at2759"/>
<dbReference type="PRO" id="PR:F4JNX2"/>
<dbReference type="Proteomes" id="UP000006548">
    <property type="component" value="Chromosome 4"/>
</dbReference>
<dbReference type="ExpressionAtlas" id="F4JNX2">
    <property type="expression patterns" value="baseline and differential"/>
</dbReference>
<dbReference type="GO" id="GO:0009507">
    <property type="term" value="C:chloroplast"/>
    <property type="evidence" value="ECO:0007669"/>
    <property type="project" value="UniProtKB-SubCell"/>
</dbReference>
<dbReference type="GO" id="GO:0009409">
    <property type="term" value="P:response to cold"/>
    <property type="evidence" value="ECO:0000270"/>
    <property type="project" value="UniProtKB"/>
</dbReference>
<dbReference type="GO" id="GO:0002239">
    <property type="term" value="P:response to oomycetes"/>
    <property type="evidence" value="ECO:0000270"/>
    <property type="project" value="UniProtKB"/>
</dbReference>
<dbReference type="GO" id="GO:0009651">
    <property type="term" value="P:response to salt stress"/>
    <property type="evidence" value="ECO:0000270"/>
    <property type="project" value="UniProtKB"/>
</dbReference>
<dbReference type="InterPro" id="IPR009686">
    <property type="entry name" value="Senescence/spartin_C"/>
</dbReference>
<dbReference type="InterPro" id="IPR045036">
    <property type="entry name" value="Spartin-like"/>
</dbReference>
<dbReference type="PANTHER" id="PTHR21068:SF29">
    <property type="entry name" value="SENESCENCE DOMAIN-CONTAINING PROTEIN"/>
    <property type="match status" value="1"/>
</dbReference>
<dbReference type="PANTHER" id="PTHR21068">
    <property type="entry name" value="SPARTIN"/>
    <property type="match status" value="1"/>
</dbReference>
<dbReference type="Pfam" id="PF06911">
    <property type="entry name" value="Senescence"/>
    <property type="match status" value="1"/>
</dbReference>
<protein>
    <recommendedName>
        <fullName evidence="5">Senescence/dehydration-associated protein At4g35985, chloroplastic</fullName>
    </recommendedName>
</protein>
<keyword id="KW-0150">Chloroplast</keyword>
<keyword id="KW-0934">Plastid</keyword>
<keyword id="KW-1185">Reference proteome</keyword>
<keyword id="KW-0809">Transit peptide</keyword>
<evidence type="ECO:0000255" key="1"/>
<evidence type="ECO:0000256" key="2">
    <source>
        <dbReference type="SAM" id="MobiDB-lite"/>
    </source>
</evidence>
<evidence type="ECO:0000269" key="3">
    <source>
    </source>
</evidence>
<evidence type="ECO:0000303" key="4">
    <source>
    </source>
</evidence>
<evidence type="ECO:0000305" key="5"/>
<evidence type="ECO:0000312" key="6">
    <source>
        <dbReference type="Araport" id="AT4G35985"/>
    </source>
</evidence>
<evidence type="ECO:0000312" key="7">
    <source>
        <dbReference type="EMBL" id="CAA18492.1"/>
    </source>
</evidence>
<comment type="subcellular location">
    <subcellularLocation>
        <location evidence="1">Plastid</location>
        <location evidence="1">Chloroplast</location>
    </subcellularLocation>
</comment>
<comment type="tissue specificity">
    <text evidence="3">Expressed in leaves (especially in midribs and trichomes), apical meristemic regions, stems, roots and flowers.</text>
</comment>
<comment type="induction">
    <text evidence="3">By salt stress (e.g. NaCl) and cold. Induced by P.tabacina.</text>
</comment>
<comment type="sequence caution" evidence="5">
    <conflict type="erroneous gene model prediction">
        <sequence resource="EMBL-CDS" id="CAA18492"/>
    </conflict>
</comment>
<comment type="sequence caution" evidence="5">
    <conflict type="erroneous gene model prediction">
        <sequence resource="EMBL-CDS" id="CAA21484"/>
    </conflict>
</comment>
<comment type="sequence caution" evidence="5">
    <conflict type="erroneous gene model prediction">
        <sequence resource="EMBL-CDS" id="CAB81507"/>
    </conflict>
</comment>
<sequence length="448" mass="48679">MECSATPPKLYPTVDTSTTVAPLPKSSSSSSSTNNNNLYPSINVNDLVNNIFPDPTASDSASAPPLATEEVILTIHGAMVHLIDKSYSVELACGDLEILRLVQGDITVAVFARVGDEIQWPLTKDEPAVKVDESHYFFSLRPVKESESSDHSVNETENEMLNYGLTMASKGQEPMLEKLDKILADYSSFTAEEKQKEENVLDLTAAKETSPEELKGKRKKMVEKQCTAYWTTLAPNVEDYSGVAAKLIAAGSGQLIKGILWCGDLTMDRLMWGNDFMKKKLSKAEKERQVSPGTLKRLKRVKKMTKMTEKVANGVLSGVVKVSGFFSSSVINSKAGQKLFGLLPGEMVLATLDGFNKVCDAVEVAGRHVMKTTSDVTTEIVDHKYGAKTAQATNEGLSAAGHAFGTAWTVFKIRQALNPKSAMKPSSLAKTVVKTAAKERKKGKKSSK</sequence>
<feature type="transit peptide" description="Chloroplast" evidence="1">
    <location>
        <begin position="1"/>
        <end position="56"/>
    </location>
</feature>
<feature type="chain" id="PRO_0000436973" description="Senescence/dehydration-associated protein At4g35985, chloroplastic">
    <location>
        <begin position="57"/>
        <end position="448"/>
    </location>
</feature>
<feature type="domain" description="Senescence" evidence="1">
    <location>
        <begin position="248"/>
        <end position="416"/>
    </location>
</feature>
<feature type="region of interest" description="Disordered" evidence="2">
    <location>
        <begin position="1"/>
        <end position="36"/>
    </location>
</feature>
<feature type="region of interest" description="Disordered" evidence="2">
    <location>
        <begin position="422"/>
        <end position="448"/>
    </location>
</feature>
<feature type="compositionally biased region" description="Low complexity" evidence="2">
    <location>
        <begin position="26"/>
        <end position="36"/>
    </location>
</feature>
<feature type="compositionally biased region" description="Basic residues" evidence="2">
    <location>
        <begin position="439"/>
        <end position="448"/>
    </location>
</feature>
<name>SDEH4_ARATH</name>
<accession>F4JNX2</accession>
<accession>O65635</accession>
<gene>
    <name evidence="4" type="primary">P85</name>
    <name evidence="6" type="ordered locus">At4g35985</name>
    <name evidence="7" type="ORF">T19K4.110</name>
</gene>
<organism>
    <name type="scientific">Arabidopsis thaliana</name>
    <name type="common">Mouse-ear cress</name>
    <dbReference type="NCBI Taxonomy" id="3702"/>
    <lineage>
        <taxon>Eukaryota</taxon>
        <taxon>Viridiplantae</taxon>
        <taxon>Streptophyta</taxon>
        <taxon>Embryophyta</taxon>
        <taxon>Tracheophyta</taxon>
        <taxon>Spermatophyta</taxon>
        <taxon>Magnoliopsida</taxon>
        <taxon>eudicotyledons</taxon>
        <taxon>Gunneridae</taxon>
        <taxon>Pentapetalae</taxon>
        <taxon>rosids</taxon>
        <taxon>malvids</taxon>
        <taxon>Brassicales</taxon>
        <taxon>Brassicaceae</taxon>
        <taxon>Camelineae</taxon>
        <taxon>Arabidopsis</taxon>
    </lineage>
</organism>